<dbReference type="EMBL" id="BC044048">
    <property type="protein sequence ID" value="AAH44048.1"/>
    <property type="molecule type" value="mRNA"/>
</dbReference>
<dbReference type="RefSeq" id="NP_001080168.1">
    <property type="nucleotide sequence ID" value="NM_001086699.1"/>
</dbReference>
<dbReference type="RefSeq" id="XP_018122551.1">
    <property type="nucleotide sequence ID" value="XM_018267062.1"/>
</dbReference>
<dbReference type="RefSeq" id="XP_018122629.1">
    <property type="nucleotide sequence ID" value="XM_018267140.1"/>
</dbReference>
<dbReference type="SMR" id="Q7ZXZ2"/>
<dbReference type="DNASU" id="379860"/>
<dbReference type="GeneID" id="379860"/>
<dbReference type="KEGG" id="xla:379860"/>
<dbReference type="AGR" id="Xenbase:XB-GENE-866061"/>
<dbReference type="CTD" id="379860"/>
<dbReference type="Xenbase" id="XB-GENE-866061">
    <property type="gene designation" value="utp15.L"/>
</dbReference>
<dbReference type="OMA" id="ATYQVVH"/>
<dbReference type="OrthoDB" id="431715at2759"/>
<dbReference type="Proteomes" id="UP000186698">
    <property type="component" value="Chromosome 1L"/>
</dbReference>
<dbReference type="Bgee" id="379860">
    <property type="expression patterns" value="Expressed in neurula embryo and 19 other cell types or tissues"/>
</dbReference>
<dbReference type="GO" id="GO:0005730">
    <property type="term" value="C:nucleolus"/>
    <property type="evidence" value="ECO:0000318"/>
    <property type="project" value="GO_Central"/>
</dbReference>
<dbReference type="GO" id="GO:0032040">
    <property type="term" value="C:small-subunit processome"/>
    <property type="evidence" value="ECO:0000250"/>
    <property type="project" value="UniProtKB"/>
</dbReference>
<dbReference type="GO" id="GO:0045943">
    <property type="term" value="P:positive regulation of transcription by RNA polymerase I"/>
    <property type="evidence" value="ECO:0000318"/>
    <property type="project" value="GO_Central"/>
</dbReference>
<dbReference type="GO" id="GO:0042274">
    <property type="term" value="P:ribosomal small subunit biogenesis"/>
    <property type="evidence" value="ECO:0000250"/>
    <property type="project" value="UniProtKB"/>
</dbReference>
<dbReference type="GO" id="GO:0006364">
    <property type="term" value="P:rRNA processing"/>
    <property type="evidence" value="ECO:0000318"/>
    <property type="project" value="GO_Central"/>
</dbReference>
<dbReference type="CDD" id="cd00200">
    <property type="entry name" value="WD40"/>
    <property type="match status" value="1"/>
</dbReference>
<dbReference type="FunFam" id="2.130.10.10:FF:000978">
    <property type="entry name" value="U3 small nucleolar RNA-associated protein 15 homolog"/>
    <property type="match status" value="1"/>
</dbReference>
<dbReference type="FunFam" id="2.130.10.10:FF:002002">
    <property type="entry name" value="U3 small nucleolar RNA-associated protein 15 homolog"/>
    <property type="match status" value="1"/>
</dbReference>
<dbReference type="Gene3D" id="2.130.10.10">
    <property type="entry name" value="YVTN repeat-like/Quinoprotein amine dehydrogenase"/>
    <property type="match status" value="2"/>
</dbReference>
<dbReference type="InterPro" id="IPR018983">
    <property type="entry name" value="U3_snoRNA-assocProt_15_C"/>
</dbReference>
<dbReference type="InterPro" id="IPR015943">
    <property type="entry name" value="WD40/YVTN_repeat-like_dom_sf"/>
</dbReference>
<dbReference type="InterPro" id="IPR019775">
    <property type="entry name" value="WD40_repeat_CS"/>
</dbReference>
<dbReference type="InterPro" id="IPR036322">
    <property type="entry name" value="WD40_repeat_dom_sf"/>
</dbReference>
<dbReference type="InterPro" id="IPR001680">
    <property type="entry name" value="WD40_rpt"/>
</dbReference>
<dbReference type="PANTHER" id="PTHR19924:SF26">
    <property type="entry name" value="U3 SMALL NUCLEOLAR RNA-ASSOCIATED PROTEIN 15 HOMOLOG"/>
    <property type="match status" value="1"/>
</dbReference>
<dbReference type="PANTHER" id="PTHR19924">
    <property type="entry name" value="UTP15 U3 SMALL NUCLEOLAR RNA-ASSOCIATED PROTEIN 15 FAMILY MEMBER"/>
    <property type="match status" value="1"/>
</dbReference>
<dbReference type="Pfam" id="PF09384">
    <property type="entry name" value="UTP15_C"/>
    <property type="match status" value="1"/>
</dbReference>
<dbReference type="Pfam" id="PF00400">
    <property type="entry name" value="WD40"/>
    <property type="match status" value="4"/>
</dbReference>
<dbReference type="SMART" id="SM00320">
    <property type="entry name" value="WD40"/>
    <property type="match status" value="6"/>
</dbReference>
<dbReference type="SUPFAM" id="SSF50978">
    <property type="entry name" value="WD40 repeat-like"/>
    <property type="match status" value="1"/>
</dbReference>
<dbReference type="PROSITE" id="PS00678">
    <property type="entry name" value="WD_REPEATS_1"/>
    <property type="match status" value="1"/>
</dbReference>
<dbReference type="PROSITE" id="PS50082">
    <property type="entry name" value="WD_REPEATS_2"/>
    <property type="match status" value="2"/>
</dbReference>
<dbReference type="PROSITE" id="PS50294">
    <property type="entry name" value="WD_REPEATS_REGION"/>
    <property type="match status" value="1"/>
</dbReference>
<feature type="chain" id="PRO_0000051326" description="U3 small nucleolar RNA-associated protein 15 homolog">
    <location>
        <begin position="1"/>
        <end position="515"/>
    </location>
</feature>
<feature type="repeat" description="WD 1">
    <location>
        <begin position="36"/>
        <end position="75"/>
    </location>
</feature>
<feature type="repeat" description="WD 2">
    <location>
        <begin position="78"/>
        <end position="117"/>
    </location>
</feature>
<feature type="repeat" description="WD 3">
    <location>
        <begin position="120"/>
        <end position="159"/>
    </location>
</feature>
<feature type="repeat" description="WD 4">
    <location>
        <begin position="162"/>
        <end position="202"/>
    </location>
</feature>
<feature type="repeat" description="WD 5">
    <location>
        <begin position="204"/>
        <end position="242"/>
    </location>
</feature>
<feature type="repeat" description="WD 6">
    <location>
        <begin position="246"/>
        <end position="285"/>
    </location>
</feature>
<feature type="repeat" description="WD 7">
    <location>
        <begin position="287"/>
        <end position="326"/>
    </location>
</feature>
<gene>
    <name type="primary">utp15</name>
</gene>
<comment type="function">
    <text evidence="1">Ribosome biogenesis factor. Involved in nucleolar processing of pre-18S ribosomal RNA. Required for optimal pre-ribosomal RNA transcription by RNA polymerase I. Part of the small subunit (SSU) processome, first precursor of the small eukaryotic ribosomal subunit. During the assembly of the SSU processome in the nucleolus, many ribosome biogenesis factors, an RNA chaperone and ribosomal proteins associate with the nascent pre-rRNA and work in concert to generate RNA folding, modifications, rearrangements and cleavage as well as targeted degradation of pre-ribosomal RNA by the RNA exosome.</text>
</comment>
<comment type="subunit">
    <text evidence="1">Part of the small subunit (SSU) processome, composed of more than 70 proteins and the RNA chaperone small nucleolar RNA (snoRNA) U3. May be a component of the proposed t-UTP subcomplex of the ribosomal small subunit (SSU) processome.</text>
</comment>
<comment type="subcellular location">
    <subcellularLocation>
        <location evidence="1">Nucleus</location>
        <location evidence="1">Nucleolus</location>
    </subcellularLocation>
</comment>
<organism>
    <name type="scientific">Xenopus laevis</name>
    <name type="common">African clawed frog</name>
    <dbReference type="NCBI Taxonomy" id="8355"/>
    <lineage>
        <taxon>Eukaryota</taxon>
        <taxon>Metazoa</taxon>
        <taxon>Chordata</taxon>
        <taxon>Craniata</taxon>
        <taxon>Vertebrata</taxon>
        <taxon>Euteleostomi</taxon>
        <taxon>Amphibia</taxon>
        <taxon>Batrachia</taxon>
        <taxon>Anura</taxon>
        <taxon>Pipoidea</taxon>
        <taxon>Pipidae</taxon>
        <taxon>Xenopodinae</taxon>
        <taxon>Xenopus</taxon>
        <taxon>Xenopus</taxon>
    </lineage>
</organism>
<protein>
    <recommendedName>
        <fullName>U3 small nucleolar RNA-associated protein 15 homolog</fullName>
    </recommendedName>
</protein>
<proteinExistence type="evidence at transcript level"/>
<accession>Q7ZXZ2</accession>
<sequence length="515" mass="58235">MSSYKPLAIPTYPKLGEKITQDTLYWKRYKTPVQIKEFGAVTKIHFSPIQPFSYAVTSSTRIHLYGQYSQEPVKTFSRFKDTAYCGTYRGDGKLLAAGCEDSVVQLFDISGKAALRQFSGHSKAVHFVDFTSDKYRIVSGSDDYTSKLWDIPNGIEIASYKEHTDYIRCGCTSSLNNDLFATGSYDHTIKVFDGRTDKSVMSMDHGQPVESVLLFPSGGLLVSAGGRYVKVWDILKGGQLLVSLRNHHKTVTCLCLSSSGQRLLSGSLDRHVKVYSTMNYKVVHSFDYAASILSLALAPDDQMIVVGMTNGVLNIKHRKPEERKPLQSTTKRHPRYRVFVRGKDYMPKQDDIYVSKPVREHLKKYDQLLKGFHMSKALDAVLQSQIRTKKPEVTVAVMNELKRRGTLKNALAGRNEKELSDLLIFLLKHLVNPLFLPILLNVAEHIIDIYSPVVGQSSVIHKQFIRLQEVVEKEINYQEELLKILGMMDTLFATMTTKKESPWEEPKPILPLGSQ</sequence>
<name>UTP15_XENLA</name>
<reference key="1">
    <citation type="submission" date="2003-01" db="EMBL/GenBank/DDBJ databases">
        <authorList>
            <consortium name="NIH - Xenopus Gene Collection (XGC) project"/>
        </authorList>
    </citation>
    <scope>NUCLEOTIDE SEQUENCE [LARGE SCALE MRNA]</scope>
    <source>
        <tissue>Embryo</tissue>
    </source>
</reference>
<keyword id="KW-0539">Nucleus</keyword>
<keyword id="KW-1185">Reference proteome</keyword>
<keyword id="KW-0677">Repeat</keyword>
<keyword id="KW-0698">rRNA processing</keyword>
<keyword id="KW-0853">WD repeat</keyword>
<evidence type="ECO:0000250" key="1">
    <source>
        <dbReference type="UniProtKB" id="Q8TED0"/>
    </source>
</evidence>